<keyword id="KW-0963">Cytoplasm</keyword>
<keyword id="KW-0251">Elongation factor</keyword>
<keyword id="KW-0342">GTP-binding</keyword>
<keyword id="KW-0488">Methylation</keyword>
<keyword id="KW-0547">Nucleotide-binding</keyword>
<keyword id="KW-0648">Protein biosynthesis</keyword>
<keyword id="KW-1185">Reference proteome</keyword>
<evidence type="ECO:0000250" key="1"/>
<evidence type="ECO:0000250" key="2">
    <source>
        <dbReference type="UniProtKB" id="P02994"/>
    </source>
</evidence>
<evidence type="ECO:0000305" key="3"/>
<proteinExistence type="inferred from homology"/>
<organism>
    <name type="scientific">Meyerozyma guilliermondii (strain ATCC 6260 / CBS 566 / DSM 6381 / JCM 1539 / NBRC 10279 / NRRL Y-324)</name>
    <name type="common">Yeast</name>
    <name type="synonym">Candida guilliermondii</name>
    <dbReference type="NCBI Taxonomy" id="294746"/>
    <lineage>
        <taxon>Eukaryota</taxon>
        <taxon>Fungi</taxon>
        <taxon>Dikarya</taxon>
        <taxon>Ascomycota</taxon>
        <taxon>Saccharomycotina</taxon>
        <taxon>Pichiomycetes</taxon>
        <taxon>Debaryomycetaceae</taxon>
        <taxon>Meyerozyma</taxon>
    </lineage>
</organism>
<dbReference type="EMBL" id="CH408160">
    <property type="protein sequence ID" value="EDK41046.1"/>
    <property type="status" value="ALT_FRAME"/>
    <property type="molecule type" value="Genomic_DNA"/>
</dbReference>
<dbReference type="EMBL" id="DQ447230">
    <property type="protein sequence ID" value="ABE27724.1"/>
    <property type="molecule type" value="Genomic_DNA"/>
</dbReference>
<dbReference type="RefSeq" id="XP_001483189.1">
    <property type="nucleotide sequence ID" value="XM_001483139.1"/>
</dbReference>
<dbReference type="SMR" id="A5DPE3"/>
<dbReference type="FunCoup" id="A5DPE3">
    <property type="interactions" value="1798"/>
</dbReference>
<dbReference type="STRING" id="294746.A5DPE3"/>
<dbReference type="GeneID" id="5124727"/>
<dbReference type="KEGG" id="pgu:PGUG_05144"/>
<dbReference type="eggNOG" id="KOG0052">
    <property type="taxonomic scope" value="Eukaryota"/>
</dbReference>
<dbReference type="HOGENOM" id="CLU_007265_3_5_1"/>
<dbReference type="InParanoid" id="A5DPE3"/>
<dbReference type="OrthoDB" id="4004225at2759"/>
<dbReference type="UniPathway" id="UPA00345"/>
<dbReference type="Proteomes" id="UP000001997">
    <property type="component" value="Unassembled WGS sequence"/>
</dbReference>
<dbReference type="GO" id="GO:0005737">
    <property type="term" value="C:cytoplasm"/>
    <property type="evidence" value="ECO:0007669"/>
    <property type="project" value="UniProtKB-SubCell"/>
</dbReference>
<dbReference type="GO" id="GO:0005525">
    <property type="term" value="F:GTP binding"/>
    <property type="evidence" value="ECO:0007669"/>
    <property type="project" value="UniProtKB-KW"/>
</dbReference>
<dbReference type="GO" id="GO:0003924">
    <property type="term" value="F:GTPase activity"/>
    <property type="evidence" value="ECO:0007669"/>
    <property type="project" value="InterPro"/>
</dbReference>
<dbReference type="GO" id="GO:0003746">
    <property type="term" value="F:translation elongation factor activity"/>
    <property type="evidence" value="ECO:0007669"/>
    <property type="project" value="UniProtKB-KW"/>
</dbReference>
<dbReference type="CDD" id="cd01883">
    <property type="entry name" value="EF1_alpha"/>
    <property type="match status" value="1"/>
</dbReference>
<dbReference type="CDD" id="cd03693">
    <property type="entry name" value="EF1_alpha_II"/>
    <property type="match status" value="1"/>
</dbReference>
<dbReference type="CDD" id="cd03705">
    <property type="entry name" value="EF1_alpha_III"/>
    <property type="match status" value="1"/>
</dbReference>
<dbReference type="FunFam" id="2.40.30.10:FF:000003">
    <property type="entry name" value="Elongation factor 1-alpha"/>
    <property type="match status" value="1"/>
</dbReference>
<dbReference type="FunFam" id="2.40.30.10:FF:000005">
    <property type="entry name" value="Elongation factor 1-alpha"/>
    <property type="match status" value="1"/>
</dbReference>
<dbReference type="FunFam" id="3.40.50.300:FF:000211">
    <property type="entry name" value="Elongation factor 1-alpha"/>
    <property type="match status" value="1"/>
</dbReference>
<dbReference type="Gene3D" id="3.40.50.300">
    <property type="entry name" value="P-loop containing nucleotide triphosphate hydrolases"/>
    <property type="match status" value="1"/>
</dbReference>
<dbReference type="Gene3D" id="2.40.30.10">
    <property type="entry name" value="Translation factors"/>
    <property type="match status" value="2"/>
</dbReference>
<dbReference type="HAMAP" id="MF_00118_A">
    <property type="entry name" value="EF_Tu_A"/>
    <property type="match status" value="1"/>
</dbReference>
<dbReference type="InterPro" id="IPR004161">
    <property type="entry name" value="EFTu-like_2"/>
</dbReference>
<dbReference type="InterPro" id="IPR031157">
    <property type="entry name" value="G_TR_CS"/>
</dbReference>
<dbReference type="InterPro" id="IPR054696">
    <property type="entry name" value="GTP-eEF1A_C"/>
</dbReference>
<dbReference type="InterPro" id="IPR027417">
    <property type="entry name" value="P-loop_NTPase"/>
</dbReference>
<dbReference type="InterPro" id="IPR000795">
    <property type="entry name" value="T_Tr_GTP-bd_dom"/>
</dbReference>
<dbReference type="InterPro" id="IPR050100">
    <property type="entry name" value="TRAFAC_GTPase_members"/>
</dbReference>
<dbReference type="InterPro" id="IPR009000">
    <property type="entry name" value="Transl_B-barrel_sf"/>
</dbReference>
<dbReference type="InterPro" id="IPR009001">
    <property type="entry name" value="Transl_elong_EF1A/Init_IF2_C"/>
</dbReference>
<dbReference type="InterPro" id="IPR004539">
    <property type="entry name" value="Transl_elong_EF1A_euk/arc"/>
</dbReference>
<dbReference type="NCBIfam" id="TIGR00483">
    <property type="entry name" value="EF-1_alpha"/>
    <property type="match status" value="1"/>
</dbReference>
<dbReference type="NCBIfam" id="NF008969">
    <property type="entry name" value="PRK12317.1"/>
    <property type="match status" value="1"/>
</dbReference>
<dbReference type="PANTHER" id="PTHR23115">
    <property type="entry name" value="TRANSLATION FACTOR"/>
    <property type="match status" value="1"/>
</dbReference>
<dbReference type="Pfam" id="PF22594">
    <property type="entry name" value="GTP-eEF1A_C"/>
    <property type="match status" value="1"/>
</dbReference>
<dbReference type="Pfam" id="PF00009">
    <property type="entry name" value="GTP_EFTU"/>
    <property type="match status" value="1"/>
</dbReference>
<dbReference type="Pfam" id="PF03144">
    <property type="entry name" value="GTP_EFTU_D2"/>
    <property type="match status" value="1"/>
</dbReference>
<dbReference type="PRINTS" id="PR00315">
    <property type="entry name" value="ELONGATNFCT"/>
</dbReference>
<dbReference type="SUPFAM" id="SSF50465">
    <property type="entry name" value="EF-Tu/eEF-1alpha/eIF2-gamma C-terminal domain"/>
    <property type="match status" value="1"/>
</dbReference>
<dbReference type="SUPFAM" id="SSF52540">
    <property type="entry name" value="P-loop containing nucleoside triphosphate hydrolases"/>
    <property type="match status" value="1"/>
</dbReference>
<dbReference type="SUPFAM" id="SSF50447">
    <property type="entry name" value="Translation proteins"/>
    <property type="match status" value="1"/>
</dbReference>
<dbReference type="PROSITE" id="PS00301">
    <property type="entry name" value="G_TR_1"/>
    <property type="match status" value="1"/>
</dbReference>
<dbReference type="PROSITE" id="PS51722">
    <property type="entry name" value="G_TR_2"/>
    <property type="match status" value="1"/>
</dbReference>
<comment type="function">
    <text evidence="1">This protein promotes the GTP-dependent binding of aminoacyl-tRNA to the A-site of ribosomes during protein biosynthesis.</text>
</comment>
<comment type="pathway">
    <text>Protein biosynthesis; polypeptide chain elongation.</text>
</comment>
<comment type="subcellular location">
    <subcellularLocation>
        <location evidence="1">Cytoplasm</location>
    </subcellularLocation>
</comment>
<comment type="similarity">
    <text evidence="3">Belongs to the TRAFAC class translation factor GTPase superfamily. Classic translation factor GTPase family. EF-Tu/EF-1A subfamily.</text>
</comment>
<comment type="sequence caution" evidence="3">
    <conflict type="frameshift">
        <sequence resource="EMBL-CDS" id="EDK41046"/>
    </conflict>
</comment>
<gene>
    <name type="primary">TEF1</name>
    <name type="ORF">PGUG_05144</name>
</gene>
<reference key="1">
    <citation type="journal article" date="2009" name="Nature">
        <title>Evolution of pathogenicity and sexual reproduction in eight Candida genomes.</title>
        <authorList>
            <person name="Butler G."/>
            <person name="Rasmussen M.D."/>
            <person name="Lin M.F."/>
            <person name="Santos M.A.S."/>
            <person name="Sakthikumar S."/>
            <person name="Munro C.A."/>
            <person name="Rheinbay E."/>
            <person name="Grabherr M."/>
            <person name="Forche A."/>
            <person name="Reedy J.L."/>
            <person name="Agrafioti I."/>
            <person name="Arnaud M.B."/>
            <person name="Bates S."/>
            <person name="Brown A.J.P."/>
            <person name="Brunke S."/>
            <person name="Costanzo M.C."/>
            <person name="Fitzpatrick D.A."/>
            <person name="de Groot P.W.J."/>
            <person name="Harris D."/>
            <person name="Hoyer L.L."/>
            <person name="Hube B."/>
            <person name="Klis F.M."/>
            <person name="Kodira C."/>
            <person name="Lennard N."/>
            <person name="Logue M.E."/>
            <person name="Martin R."/>
            <person name="Neiman A.M."/>
            <person name="Nikolaou E."/>
            <person name="Quail M.A."/>
            <person name="Quinn J."/>
            <person name="Santos M.C."/>
            <person name="Schmitzberger F.F."/>
            <person name="Sherlock G."/>
            <person name="Shah P."/>
            <person name="Silverstein K.A.T."/>
            <person name="Skrzypek M.S."/>
            <person name="Soll D."/>
            <person name="Staggs R."/>
            <person name="Stansfield I."/>
            <person name="Stumpf M.P.H."/>
            <person name="Sudbery P.E."/>
            <person name="Srikantha T."/>
            <person name="Zeng Q."/>
            <person name="Berman J."/>
            <person name="Berriman M."/>
            <person name="Heitman J."/>
            <person name="Gow N.A.R."/>
            <person name="Lorenz M.C."/>
            <person name="Birren B.W."/>
            <person name="Kellis M."/>
            <person name="Cuomo C.A."/>
        </authorList>
    </citation>
    <scope>NUCLEOTIDE SEQUENCE [LARGE SCALE GENOMIC DNA]</scope>
    <source>
        <strain>ATCC 6260 / CBS 566 / DSM 6381 / JCM 1539 / NBRC 10279 / NRRL Y-324</strain>
    </source>
</reference>
<reference key="2">
    <citation type="submission" date="2006-03" db="EMBL/GenBank/DDBJ databases">
        <authorList>
            <person name="Piche Y."/>
            <person name="Boissinot M."/>
            <person name="Boudreau D.K."/>
            <person name="Trepanier H."/>
            <person name="Boily M.-J."/>
            <person name="Picard F.J."/>
            <person name="Ouellette M."/>
            <person name="Roy P.H."/>
            <person name="Bergeron M.G."/>
        </authorList>
    </citation>
    <scope>NUCLEOTIDE SEQUENCE [GENOMIC DNA] OF 59-305</scope>
    <source>
        <strain>ATCC 6260 / CBS 566 / DSM 6381 / JCM 1539 / NBRC 10279 / NRRL Y-324</strain>
    </source>
</reference>
<feature type="initiator methionine" description="Removed" evidence="2">
    <location>
        <position position="1"/>
    </location>
</feature>
<feature type="chain" id="PRO_0000295029" description="Elongation factor 1-alpha">
    <location>
        <begin position="2"/>
        <end position="458"/>
    </location>
</feature>
<feature type="domain" description="tr-type G">
    <location>
        <begin position="5"/>
        <end position="240"/>
    </location>
</feature>
<feature type="region of interest" description="G1" evidence="1">
    <location>
        <begin position="14"/>
        <end position="21"/>
    </location>
</feature>
<feature type="region of interest" description="G2" evidence="1">
    <location>
        <begin position="70"/>
        <end position="74"/>
    </location>
</feature>
<feature type="region of interest" description="G3" evidence="1">
    <location>
        <begin position="91"/>
        <end position="94"/>
    </location>
</feature>
<feature type="region of interest" description="G4" evidence="1">
    <location>
        <begin position="153"/>
        <end position="156"/>
    </location>
</feature>
<feature type="region of interest" description="G5" evidence="1">
    <location>
        <begin position="192"/>
        <end position="194"/>
    </location>
</feature>
<feature type="binding site" evidence="1">
    <location>
        <begin position="14"/>
        <end position="21"/>
    </location>
    <ligand>
        <name>GTP</name>
        <dbReference type="ChEBI" id="CHEBI:37565"/>
    </ligand>
</feature>
<feature type="binding site" evidence="1">
    <location>
        <begin position="91"/>
        <end position="95"/>
    </location>
    <ligand>
        <name>GTP</name>
        <dbReference type="ChEBI" id="CHEBI:37565"/>
    </ligand>
</feature>
<feature type="binding site" evidence="1">
    <location>
        <begin position="153"/>
        <end position="156"/>
    </location>
    <ligand>
        <name>GTP</name>
        <dbReference type="ChEBI" id="CHEBI:37565"/>
    </ligand>
</feature>
<feature type="modified residue" description="N,N,N-trimethylglycine" evidence="2">
    <location>
        <position position="2"/>
    </location>
</feature>
<feature type="modified residue" description="N6,N6-dimethyllysine; alternate" evidence="2">
    <location>
        <position position="3"/>
    </location>
</feature>
<feature type="modified residue" description="N6-methyllysine; alternate" evidence="2">
    <location>
        <position position="3"/>
    </location>
</feature>
<feature type="modified residue" description="N6-methyllysine" evidence="2">
    <location>
        <position position="30"/>
    </location>
</feature>
<feature type="modified residue" description="N6,N6,N6-trimethyllysine" evidence="2">
    <location>
        <position position="79"/>
    </location>
</feature>
<feature type="modified residue" description="N6,N6-dimethyllysine; alternate" evidence="2">
    <location>
        <position position="316"/>
    </location>
</feature>
<feature type="modified residue" description="N6-methyllysine; alternate" evidence="2">
    <location>
        <position position="316"/>
    </location>
</feature>
<feature type="modified residue" description="N6-methyllysine" evidence="2">
    <location>
        <position position="390"/>
    </location>
</feature>
<protein>
    <recommendedName>
        <fullName>Elongation factor 1-alpha</fullName>
        <shortName>EF-1-alpha</shortName>
    </recommendedName>
</protein>
<accession>A5DPE3</accession>
<accession>Q0ZIC9</accession>
<sequence length="458" mass="50048">MGKEKTHVNVVVIGHVDSGKSTTTGHLIYKCGGIDKRTIEKFEKEAAELGKGSFKYAWVLDKLKAERERGITIDIALWKFETPKYHVTVIDAPGHRDFIKNMITGTSQADCAILIIAGGTGEFEAGISKDGQTREHALLAYTLGVRQLIVAVNKMDSVKWDKNRFEEIIKETSNFVKKVGYNPKTVPFVPISGWNGDNMIEASTNCPWYKGWEKETKAGKSTGKTLLEAIDAIEPPQRPTDKPLRLPLQDVYKIGGIGTVPVGRVETGIIKAGMVVTFAPAGVTTEVKSVEMHHEQLVEGVPGDNVGFNVKNVSVKEIRRGNVCGDSKNDPPKGCDSFTAQVIVLNHPGQISAGYSPVLDCHTAHIACKFDTLLEKIDRRTGKKMEDNPKFVKSGDASIVKMVPSKPMCVEAFTDYPPLGRFAVRDMRQTVAVGVIKSVEKSDKAGKVTKAAQKAAKK</sequence>
<name>EF1A_PICGU</name>